<dbReference type="EC" id="2.4.1.247"/>
<dbReference type="EMBL" id="CP000885">
    <property type="protein sequence ID" value="ABX42289.1"/>
    <property type="molecule type" value="Genomic_DNA"/>
</dbReference>
<dbReference type="RefSeq" id="WP_012199943.1">
    <property type="nucleotide sequence ID" value="NC_010001.1"/>
</dbReference>
<dbReference type="SMR" id="A9KHK4"/>
<dbReference type="STRING" id="357809.Cphy_1920"/>
<dbReference type="CAZy" id="GH112">
    <property type="family name" value="Glycoside Hydrolase Family 112"/>
</dbReference>
<dbReference type="KEGG" id="cpy:Cphy_1920"/>
<dbReference type="eggNOG" id="COG5426">
    <property type="taxonomic scope" value="Bacteria"/>
</dbReference>
<dbReference type="HOGENOM" id="CLU_022367_0_0_9"/>
<dbReference type="OrthoDB" id="5834503at2"/>
<dbReference type="BioCyc" id="MetaCyc:MONOMER-15015"/>
<dbReference type="BRENDA" id="2.4.1.247">
    <property type="organism ID" value="10424"/>
</dbReference>
<dbReference type="Proteomes" id="UP000000370">
    <property type="component" value="Chromosome"/>
</dbReference>
<dbReference type="GO" id="GO:0004645">
    <property type="term" value="F:1,4-alpha-oligoglucan phosphorylase activity"/>
    <property type="evidence" value="ECO:0007669"/>
    <property type="project" value="InterPro"/>
</dbReference>
<dbReference type="GO" id="GO:0019299">
    <property type="term" value="P:rhamnose metabolic process"/>
    <property type="evidence" value="ECO:0007669"/>
    <property type="project" value="UniProtKB-KW"/>
</dbReference>
<dbReference type="Gene3D" id="3.40.50.880">
    <property type="match status" value="1"/>
</dbReference>
<dbReference type="Gene3D" id="3.20.20.80">
    <property type="entry name" value="Glycosidases"/>
    <property type="match status" value="1"/>
</dbReference>
<dbReference type="Gene3D" id="2.60.40.10">
    <property type="entry name" value="Immunoglobulins"/>
    <property type="match status" value="1"/>
</dbReference>
<dbReference type="InterPro" id="IPR029062">
    <property type="entry name" value="Class_I_gatase-like"/>
</dbReference>
<dbReference type="InterPro" id="IPR013783">
    <property type="entry name" value="Ig-like_fold"/>
</dbReference>
<dbReference type="InterPro" id="IPR035080">
    <property type="entry name" value="Lact_bio_phlase-like_N"/>
</dbReference>
<dbReference type="InterPro" id="IPR012711">
    <property type="entry name" value="Lacto-N-biose_phosphorylase"/>
</dbReference>
<dbReference type="InterPro" id="IPR035356">
    <property type="entry name" value="LBP_C"/>
</dbReference>
<dbReference type="InterPro" id="IPR035363">
    <property type="entry name" value="LBP_M"/>
</dbReference>
<dbReference type="NCBIfam" id="TIGR02336">
    <property type="entry name" value="1,3-beta-galactosyl-N-acetylhexosamine phosphorylase"/>
    <property type="match status" value="1"/>
</dbReference>
<dbReference type="Pfam" id="PF09508">
    <property type="entry name" value="Lact_bio_phlase"/>
    <property type="match status" value="1"/>
</dbReference>
<dbReference type="Pfam" id="PF17386">
    <property type="entry name" value="LBP_C"/>
    <property type="match status" value="1"/>
</dbReference>
<dbReference type="Pfam" id="PF17385">
    <property type="entry name" value="LBP_M"/>
    <property type="match status" value="1"/>
</dbReference>
<dbReference type="SUPFAM" id="SSF52317">
    <property type="entry name" value="Class I glutamine amidotransferase-like"/>
    <property type="match status" value="1"/>
</dbReference>
<proteinExistence type="evidence at protein level"/>
<name>GLRP_LACP7</name>
<reference evidence="5" key="1">
    <citation type="submission" date="2007-11" db="EMBL/GenBank/DDBJ databases">
        <title>Complete genome sequence of Clostridium phytofermentans ISDg.</title>
        <authorList>
            <person name="Leschine S.B."/>
            <person name="Warnick T.A."/>
            <person name="Blanchard J.L."/>
            <person name="Schnell D.J."/>
            <person name="Petit E.L."/>
            <person name="LaTouf W.G."/>
            <person name="Copeland A."/>
            <person name="Lucas S."/>
            <person name="Lapidus A."/>
            <person name="Barry K."/>
            <person name="Glavina del Rio T."/>
            <person name="Dalin E."/>
            <person name="Tice H."/>
            <person name="Pitluck S."/>
            <person name="Kiss H."/>
            <person name="Brettin T."/>
            <person name="Bruce D."/>
            <person name="Detter J.C."/>
            <person name="Han C."/>
            <person name="Kuske C."/>
            <person name="Schmutz J."/>
            <person name="Larimer F."/>
            <person name="Land M."/>
            <person name="Hauser L."/>
            <person name="Kyrpides N."/>
            <person name="Kim E.A."/>
            <person name="Richardson P."/>
        </authorList>
    </citation>
    <scope>NUCLEOTIDE SEQUENCE [LARGE SCALE GENOMIC DNA]</scope>
    <source>
        <strain>ATCC 700394 / DSM 18823 / ISDg</strain>
    </source>
</reference>
<reference evidence="4" key="2">
    <citation type="journal article" date="2009" name="J. Biol. Chem.">
        <title>Characterization of three beta-galactoside phosphorylases from Clostridium phytofermentans: discovery of d-galactosyl-beta1-&gt;4-l-rhamnose phosphorylase.</title>
        <authorList>
            <person name="Nakajima M."/>
            <person name="Nishimoto M."/>
            <person name="Kitaoka M."/>
        </authorList>
    </citation>
    <scope>FUNCTION</scope>
    <scope>CATALYTIC ACTIVITY</scope>
    <scope>BIOPHYSICOCHEMICAL PROPERTIES</scope>
</reference>
<comment type="function">
    <text evidence="2">Reversibly phosphorolyzes beta-D-galactosyl-(1-&gt;4)-L-rhamnose to form alpha-D-galactose 1-phosphate and L-rhamnose. Does not phosphorolyze galacto-N-biose or lacto-N-biose. In the reverse reaction, has the highest activity toward L-rhamnose, also has activity toward L-mannose, and low activity toward L-lyxose, D-glucose, 2-deoxy-D-glucose and D-galactose.</text>
</comment>
<comment type="catalytic activity">
    <reaction evidence="2">
        <text>beta-D-galactosyl-(1-&gt;4)-L-rhamnose + phosphate = alpha-D-galactose 1-phosphate + L-rhamnopyranose</text>
        <dbReference type="Rhea" id="RHEA:26474"/>
        <dbReference type="ChEBI" id="CHEBI:43474"/>
        <dbReference type="ChEBI" id="CHEBI:55332"/>
        <dbReference type="ChEBI" id="CHEBI:58336"/>
        <dbReference type="ChEBI" id="CHEBI:62346"/>
        <dbReference type="EC" id="2.4.1.247"/>
    </reaction>
</comment>
<comment type="biophysicochemical properties">
    <kinetics>
        <KM evidence="2">2.4 mM for L-rhamnose</KM>
        <KM evidence="2">78 mM for L-mannose</KM>
        <KM evidence="2">7.9 mM for beta-D-galactosyl-(1-&gt;4)-L-rhamnose</KM>
    </kinetics>
</comment>
<comment type="similarity">
    <text evidence="4">Belongs to the glycoside hydrolase 112 family.</text>
</comment>
<protein>
    <recommendedName>
        <fullName evidence="3">D-galactosyl-beta-1-&gt;4-L-rhamnose phosphorylase</fullName>
        <ecNumber>2.4.1.247</ecNumber>
    </recommendedName>
</protein>
<gene>
    <name type="ordered locus">Cphy_1920</name>
</gene>
<evidence type="ECO:0000250" key="1"/>
<evidence type="ECO:0000269" key="2">
    <source>
    </source>
</evidence>
<evidence type="ECO:0000303" key="3">
    <source>
    </source>
</evidence>
<evidence type="ECO:0000305" key="4"/>
<evidence type="ECO:0000312" key="5">
    <source>
        <dbReference type="EMBL" id="ABX42289.1"/>
    </source>
</evidence>
<feature type="chain" id="PRO_0000405292" description="D-galactosyl-beta-1-&gt;4-L-rhamnose phosphorylase">
    <location>
        <begin position="1"/>
        <end position="722"/>
    </location>
</feature>
<feature type="active site" description="Proton donor" evidence="1">
    <location>
        <position position="319"/>
    </location>
</feature>
<organism>
    <name type="scientific">Lachnoclostridium phytofermentans (strain ATCC 700394 / DSM 18823 / ISDg)</name>
    <name type="common">Clostridium phytofermentans</name>
    <dbReference type="NCBI Taxonomy" id="357809"/>
    <lineage>
        <taxon>Bacteria</taxon>
        <taxon>Bacillati</taxon>
        <taxon>Bacillota</taxon>
        <taxon>Clostridia</taxon>
        <taxon>Lachnospirales</taxon>
        <taxon>Lachnospiraceae</taxon>
    </lineage>
</organism>
<sequence>MEQQKEITKGGFTLPGEAGFEKLTLELANRWGADVIRDSDGTELSDDILNAGYGIYSTICLIRDHNAWAKANIDKLQQTFLVTSPVVANSETLTIDLMEGFFKEQFLVNDSEEALEYWQVYDRTTETLLQKESWSYHPQNQTVVLTGICPWHKYTVSFMAYRIWEEISMYNHTTNNWNKEHLMQIDPIHKETQEYLLTWMDDWCKKHEQTTVVRFTSMFYNFVWMWGSNEKNRYLFSDWASYDFTVSPHALKLFEEEYGYVLTAEDFIHQGKFHVTHMPADKHKLDWMEFINNFVVDFGKKLIDIVHNYGKLAYVFYDDSWVGVEPYHKNFEKFGFDGLIKCVFSGFEVRLCAGVKVNTHELRLHPYLFPVGLGGAPTFMEGGNPTLDAKNYWISVRRALLREPIDRIGLGGYLHLVEDFPDFTDYIEKIANEFRRIKELHNAGKPMALKPRIAVLHSWGSLRSWTLSGHFHETYMHDLIHINESLSGLPFDVKFINFEDINQGALEEVDVVINAGIMGSAWTGGQAWEDQEIIERLTRFVYEGKAFIGVNEPSALTGYDTLYRMAHVLGVDMDLGDRVSHGRYSFTEEPVEELEFAECGPKAKRNIYLTDGLAKVLKEENGIPVMTSYEFGRGRGIYLASYEHSIKNARTLLNIILYAAGESFHQEGITNNVYTECAYYEKDKILVMINNSNTLQESSVTIKGRTYTKDIPAFDTVILPLE</sequence>
<accession>A9KHK4</accession>
<keyword id="KW-0119">Carbohydrate metabolism</keyword>
<keyword id="KW-0328">Glycosyltransferase</keyword>
<keyword id="KW-1185">Reference proteome</keyword>
<keyword id="KW-0684">Rhamnose metabolism</keyword>
<keyword id="KW-0808">Transferase</keyword>